<comment type="function">
    <text evidence="1">Probably functions as a manganese efflux pump.</text>
</comment>
<comment type="subcellular location">
    <subcellularLocation>
        <location evidence="1">Cell inner membrane</location>
        <topology evidence="1">Multi-pass membrane protein</topology>
    </subcellularLocation>
</comment>
<comment type="similarity">
    <text evidence="1">Belongs to the MntP (TC 9.B.29) family.</text>
</comment>
<protein>
    <recommendedName>
        <fullName evidence="1">Putative manganese efflux pump MntP</fullName>
    </recommendedName>
</protein>
<organism>
    <name type="scientific">Cronobacter sakazakii (strain ATCC BAA-894)</name>
    <name type="common">Enterobacter sakazakii</name>
    <dbReference type="NCBI Taxonomy" id="290339"/>
    <lineage>
        <taxon>Bacteria</taxon>
        <taxon>Pseudomonadati</taxon>
        <taxon>Pseudomonadota</taxon>
        <taxon>Gammaproteobacteria</taxon>
        <taxon>Enterobacterales</taxon>
        <taxon>Enterobacteriaceae</taxon>
        <taxon>Cronobacter</taxon>
    </lineage>
</organism>
<gene>
    <name evidence="1" type="primary">mntP</name>
    <name type="ordered locus">ESA_01430</name>
</gene>
<keyword id="KW-0997">Cell inner membrane</keyword>
<keyword id="KW-1003">Cell membrane</keyword>
<keyword id="KW-0406">Ion transport</keyword>
<keyword id="KW-0464">Manganese</keyword>
<keyword id="KW-0472">Membrane</keyword>
<keyword id="KW-1185">Reference proteome</keyword>
<keyword id="KW-0812">Transmembrane</keyword>
<keyword id="KW-1133">Transmembrane helix</keyword>
<keyword id="KW-0813">Transport</keyword>
<accession>A7MNM2</accession>
<name>MNTP_CROS8</name>
<evidence type="ECO:0000255" key="1">
    <source>
        <dbReference type="HAMAP-Rule" id="MF_01521"/>
    </source>
</evidence>
<dbReference type="EMBL" id="CP000783">
    <property type="protein sequence ID" value="ABU76688.1"/>
    <property type="molecule type" value="Genomic_DNA"/>
</dbReference>
<dbReference type="RefSeq" id="WP_012124489.1">
    <property type="nucleotide sequence ID" value="NC_009778.1"/>
</dbReference>
<dbReference type="KEGG" id="esa:ESA_01430"/>
<dbReference type="PATRIC" id="fig|290339.8.peg.1266"/>
<dbReference type="HOGENOM" id="CLU_096410_0_0_6"/>
<dbReference type="Proteomes" id="UP000000260">
    <property type="component" value="Chromosome"/>
</dbReference>
<dbReference type="GO" id="GO:0005886">
    <property type="term" value="C:plasma membrane"/>
    <property type="evidence" value="ECO:0007669"/>
    <property type="project" value="UniProtKB-SubCell"/>
</dbReference>
<dbReference type="GO" id="GO:0005384">
    <property type="term" value="F:manganese ion transmembrane transporter activity"/>
    <property type="evidence" value="ECO:0007669"/>
    <property type="project" value="UniProtKB-UniRule"/>
</dbReference>
<dbReference type="HAMAP" id="MF_01521">
    <property type="entry name" value="MntP_pump"/>
    <property type="match status" value="1"/>
</dbReference>
<dbReference type="InterPro" id="IPR003810">
    <property type="entry name" value="Mntp/YtaF"/>
</dbReference>
<dbReference type="InterPro" id="IPR022929">
    <property type="entry name" value="Put_MntP"/>
</dbReference>
<dbReference type="NCBIfam" id="NF008546">
    <property type="entry name" value="PRK11469.1"/>
    <property type="match status" value="1"/>
</dbReference>
<dbReference type="PANTHER" id="PTHR35529">
    <property type="entry name" value="MANGANESE EFFLUX PUMP MNTP-RELATED"/>
    <property type="match status" value="1"/>
</dbReference>
<dbReference type="PANTHER" id="PTHR35529:SF1">
    <property type="entry name" value="MANGANESE EFFLUX PUMP MNTP-RELATED"/>
    <property type="match status" value="1"/>
</dbReference>
<dbReference type="Pfam" id="PF02659">
    <property type="entry name" value="Mntp"/>
    <property type="match status" value="1"/>
</dbReference>
<proteinExistence type="inferred from homology"/>
<feature type="chain" id="PRO_1000068636" description="Putative manganese efflux pump MntP">
    <location>
        <begin position="1"/>
        <end position="187"/>
    </location>
</feature>
<feature type="transmembrane region" description="Helical" evidence="1">
    <location>
        <begin position="3"/>
        <end position="23"/>
    </location>
</feature>
<feature type="transmembrane region" description="Helical" evidence="1">
    <location>
        <begin position="41"/>
        <end position="61"/>
    </location>
</feature>
<feature type="transmembrane region" description="Helical" evidence="1">
    <location>
        <begin position="62"/>
        <end position="82"/>
    </location>
</feature>
<feature type="transmembrane region" description="Helical" evidence="1">
    <location>
        <begin position="106"/>
        <end position="128"/>
    </location>
</feature>
<feature type="transmembrane region" description="Helical" evidence="1">
    <location>
        <begin position="142"/>
        <end position="162"/>
    </location>
</feature>
<feature type="transmembrane region" description="Helical" evidence="1">
    <location>
        <begin position="167"/>
        <end position="187"/>
    </location>
</feature>
<sequence length="187" mass="19934">MNLSATLLLAFGMSMDAFAASIGKGATLHKPKFSEALRTGLIFGVIEAITPLVGWLLGLLATQFVLTWNHWIAFVLLVFLGGRMIIEGVRGCEEASEKIRRHSFWLLVTTAFATSLDAMAVGVGLAFLQVDIIKTALAIGCATLIMSTLGMMVGRFIGPLLGKRAEILGGVVLIGIGCQILWSHFAG</sequence>
<reference key="1">
    <citation type="journal article" date="2010" name="PLoS ONE">
        <title>Genome sequence of Cronobacter sakazakii BAA-894 and comparative genomic hybridization analysis with other Cronobacter species.</title>
        <authorList>
            <person name="Kucerova E."/>
            <person name="Clifton S.W."/>
            <person name="Xia X.Q."/>
            <person name="Long F."/>
            <person name="Porwollik S."/>
            <person name="Fulton L."/>
            <person name="Fronick C."/>
            <person name="Minx P."/>
            <person name="Kyung K."/>
            <person name="Warren W."/>
            <person name="Fulton R."/>
            <person name="Feng D."/>
            <person name="Wollam A."/>
            <person name="Shah N."/>
            <person name="Bhonagiri V."/>
            <person name="Nash W.E."/>
            <person name="Hallsworth-Pepin K."/>
            <person name="Wilson R.K."/>
            <person name="McClelland M."/>
            <person name="Forsythe S.J."/>
        </authorList>
    </citation>
    <scope>NUCLEOTIDE SEQUENCE [LARGE SCALE GENOMIC DNA]</scope>
    <source>
        <strain>ATCC BAA-894</strain>
    </source>
</reference>